<accession>P81468</accession>
<feature type="peptide" id="PRO_0000044717" description="Neutrophil defensin 4">
    <location>
        <begin position="1"/>
        <end position="33"/>
    </location>
</feature>
<feature type="disulfide bond" evidence="1">
    <location>
        <begin position="3"/>
        <end position="31"/>
    </location>
</feature>
<feature type="disulfide bond" evidence="1">
    <location>
        <begin position="5"/>
        <end position="20"/>
    </location>
</feature>
<feature type="disulfide bond" evidence="1">
    <location>
        <begin position="10"/>
        <end position="30"/>
    </location>
</feature>
<evidence type="ECO:0000250" key="1"/>
<evidence type="ECO:0000305" key="2"/>
<protein>
    <recommendedName>
        <fullName>Neutrophil defensin 4</fullName>
    </recommendedName>
    <alternativeName>
        <fullName>HANP-4</fullName>
    </alternativeName>
</protein>
<organism>
    <name type="scientific">Mesocricetus auratus</name>
    <name type="common">Golden hamster</name>
    <dbReference type="NCBI Taxonomy" id="10036"/>
    <lineage>
        <taxon>Eukaryota</taxon>
        <taxon>Metazoa</taxon>
        <taxon>Chordata</taxon>
        <taxon>Craniata</taxon>
        <taxon>Vertebrata</taxon>
        <taxon>Euteleostomi</taxon>
        <taxon>Mammalia</taxon>
        <taxon>Eutheria</taxon>
        <taxon>Euarchontoglires</taxon>
        <taxon>Glires</taxon>
        <taxon>Rodentia</taxon>
        <taxon>Myomorpha</taxon>
        <taxon>Muroidea</taxon>
        <taxon>Cricetidae</taxon>
        <taxon>Cricetinae</taxon>
        <taxon>Mesocricetus</taxon>
    </lineage>
</organism>
<sequence length="33" mass="3821">VTCFCKRPVCDSGETQIGYCRLGNTFYRLCCRQ</sequence>
<comment type="function">
    <text>Bactericidal activity, greater against Gram-positive bacteria. Low anti-fungi activity.</text>
</comment>
<comment type="subcellular location">
    <subcellularLocation>
        <location>Secreted</location>
    </subcellularLocation>
</comment>
<comment type="PTM">
    <text>HANP-2 could be a product of proteolytic N-terminal amino acid removal from HANP-4.</text>
</comment>
<comment type="similarity">
    <text evidence="2">Belongs to the alpha-defensin family.</text>
</comment>
<keyword id="KW-0044">Antibiotic</keyword>
<keyword id="KW-0929">Antimicrobial</keyword>
<keyword id="KW-0211">Defensin</keyword>
<keyword id="KW-0903">Direct protein sequencing</keyword>
<keyword id="KW-1015">Disulfide bond</keyword>
<keyword id="KW-0295">Fungicide</keyword>
<keyword id="KW-1185">Reference proteome</keyword>
<keyword id="KW-0964">Secreted</keyword>
<dbReference type="SMR" id="P81468"/>
<dbReference type="Proteomes" id="UP000189706">
    <property type="component" value="Unplaced"/>
</dbReference>
<dbReference type="GO" id="GO:0005576">
    <property type="term" value="C:extracellular region"/>
    <property type="evidence" value="ECO:0007669"/>
    <property type="project" value="UniProtKB-SubCell"/>
</dbReference>
<dbReference type="GO" id="GO:0042742">
    <property type="term" value="P:defense response to bacterium"/>
    <property type="evidence" value="ECO:0007669"/>
    <property type="project" value="UniProtKB-KW"/>
</dbReference>
<dbReference type="GO" id="GO:0050832">
    <property type="term" value="P:defense response to fungus"/>
    <property type="evidence" value="ECO:0007669"/>
    <property type="project" value="UniProtKB-KW"/>
</dbReference>
<dbReference type="GO" id="GO:0031640">
    <property type="term" value="P:killing of cells of another organism"/>
    <property type="evidence" value="ECO:0007669"/>
    <property type="project" value="UniProtKB-KW"/>
</dbReference>
<dbReference type="InterPro" id="IPR006081">
    <property type="entry name" value="Alpha-defensin_C"/>
</dbReference>
<dbReference type="Pfam" id="PF00323">
    <property type="entry name" value="Defensin_1"/>
    <property type="match status" value="1"/>
</dbReference>
<dbReference type="SUPFAM" id="SSF57392">
    <property type="entry name" value="Defensin-like"/>
    <property type="match status" value="1"/>
</dbReference>
<dbReference type="PROSITE" id="PS00269">
    <property type="entry name" value="DEFENSIN"/>
    <property type="match status" value="1"/>
</dbReference>
<proteinExistence type="evidence at protein level"/>
<name>DEF4_MESAU</name>
<reference key="1">
    <citation type="journal article" date="1996" name="Infect. Immun.">
        <title>Isolation, antimicrobial activities, and primary structures of hamster neutrophil defensins.</title>
        <authorList>
            <person name="Mak P."/>
            <person name="Wojcik K."/>
            <person name="Thogersen I.B."/>
            <person name="Dubin A."/>
        </authorList>
    </citation>
    <scope>PROTEIN SEQUENCE</scope>
</reference>